<feature type="chain" id="PRO_0000197014" description="Potassium-transporting ATPase KdpC subunit 2">
    <location>
        <begin position="1"/>
        <end position="185"/>
    </location>
</feature>
<feature type="transmembrane region" description="Helical" evidence="2">
    <location>
        <begin position="8"/>
        <end position="28"/>
    </location>
</feature>
<reference key="1">
    <citation type="journal article" date="2001" name="Lancet">
        <title>Whole genome sequencing of meticillin-resistant Staphylococcus aureus.</title>
        <authorList>
            <person name="Kuroda M."/>
            <person name="Ohta T."/>
            <person name="Uchiyama I."/>
            <person name="Baba T."/>
            <person name="Yuzawa H."/>
            <person name="Kobayashi I."/>
            <person name="Cui L."/>
            <person name="Oguchi A."/>
            <person name="Aoki K."/>
            <person name="Nagai Y."/>
            <person name="Lian J.-Q."/>
            <person name="Ito T."/>
            <person name="Kanamori M."/>
            <person name="Matsumaru H."/>
            <person name="Maruyama A."/>
            <person name="Murakami H."/>
            <person name="Hosoyama A."/>
            <person name="Mizutani-Ui Y."/>
            <person name="Takahashi N.K."/>
            <person name="Sawano T."/>
            <person name="Inoue R."/>
            <person name="Kaito C."/>
            <person name="Sekimizu K."/>
            <person name="Hirakawa H."/>
            <person name="Kuhara S."/>
            <person name="Goto S."/>
            <person name="Yabuzaki J."/>
            <person name="Kanehisa M."/>
            <person name="Yamashita A."/>
            <person name="Oshima K."/>
            <person name="Furuya K."/>
            <person name="Yoshino C."/>
            <person name="Shiba T."/>
            <person name="Hattori M."/>
            <person name="Ogasawara N."/>
            <person name="Hayashi H."/>
            <person name="Hiramatsu K."/>
        </authorList>
    </citation>
    <scope>NUCLEOTIDE SEQUENCE [LARGE SCALE GENOMIC DNA]</scope>
    <source>
        <strain>Mu50 / ATCC 700699</strain>
    </source>
</reference>
<reference key="2">
    <citation type="journal article" date="2010" name="Genes Dev.">
        <title>Functional microdomains in bacterial membranes.</title>
        <authorList>
            <person name="Lopez D."/>
            <person name="Kolter R."/>
        </authorList>
    </citation>
    <scope>IDENTIFICATION BY MASS SPECTROMETRY</scope>
    <scope>SUBCELLULAR LOCATION</scope>
</reference>
<gene>
    <name evidence="2" type="primary">kdpC2</name>
    <name type="ordered locus">SAV0074</name>
</gene>
<organism>
    <name type="scientific">Staphylococcus aureus (strain Mu50 / ATCC 700699)</name>
    <dbReference type="NCBI Taxonomy" id="158878"/>
    <lineage>
        <taxon>Bacteria</taxon>
        <taxon>Bacillati</taxon>
        <taxon>Bacillota</taxon>
        <taxon>Bacilli</taxon>
        <taxon>Bacillales</taxon>
        <taxon>Staphylococcaceae</taxon>
        <taxon>Staphylococcus</taxon>
    </lineage>
</organism>
<comment type="function">
    <text evidence="2">Part of the high-affinity ATP-driven potassium transport (or Kdp) system, which catalyzes the hydrolysis of ATP coupled with the electrogenic transport of potassium into the cytoplasm. This subunit acts as a catalytic chaperone that increases the ATP-binding affinity of the ATP-hydrolyzing subunit KdpB by the formation of a transient KdpB/KdpC/ATP ternary complex.</text>
</comment>
<comment type="subunit">
    <text evidence="2">The system is composed of three essential subunits: KdpA, KdpB and KdpC.</text>
</comment>
<comment type="subcellular location">
    <subcellularLocation>
        <location evidence="2 3">Cell membrane</location>
        <topology evidence="2">Single-pass membrane protein</topology>
    </subcellularLocation>
    <subcellularLocation>
        <location evidence="3">Membrane raft</location>
        <topology evidence="1">Single-pass membrane protein</topology>
    </subcellularLocation>
    <text evidence="3">Present in detergent-resistant membrane (DRM) fractions that may be equivalent to eukaryotic membrane rafts; these rafts include proteins involved in signaling, molecule trafficking and protein secretion.</text>
</comment>
<comment type="similarity">
    <text evidence="2">Belongs to the KdpC family.</text>
</comment>
<comment type="sequence caution" evidence="4">
    <conflict type="erroneous initiation">
        <sequence resource="EMBL-CDS" id="BAB56236"/>
    </conflict>
    <text>Truncated N-terminus.</text>
</comment>
<protein>
    <recommendedName>
        <fullName evidence="2">Potassium-transporting ATPase KdpC subunit 2</fullName>
    </recommendedName>
    <alternativeName>
        <fullName evidence="2">ATP phosphohydrolase [potassium-transporting] C chain 2</fullName>
    </alternativeName>
    <alternativeName>
        <fullName evidence="2">Potassium-binding and translocating subunit C 2</fullName>
    </alternativeName>
    <alternativeName>
        <fullName evidence="2">Potassium-translocating ATPase C chain 2</fullName>
    </alternativeName>
</protein>
<keyword id="KW-0067">ATP-binding</keyword>
<keyword id="KW-1003">Cell membrane</keyword>
<keyword id="KW-0406">Ion transport</keyword>
<keyword id="KW-0472">Membrane</keyword>
<keyword id="KW-0547">Nucleotide-binding</keyword>
<keyword id="KW-0630">Potassium</keyword>
<keyword id="KW-0633">Potassium transport</keyword>
<keyword id="KW-0812">Transmembrane</keyword>
<keyword id="KW-1133">Transmembrane helix</keyword>
<keyword id="KW-0813">Transport</keyword>
<accession>P0A059</accession>
<accession>Q932L1</accession>
<accession>Q9LC48</accession>
<dbReference type="EMBL" id="BA000017">
    <property type="protein sequence ID" value="BAB56236.1"/>
    <property type="status" value="ALT_INIT"/>
    <property type="molecule type" value="Genomic_DNA"/>
</dbReference>
<dbReference type="RefSeq" id="WP_001193482.1">
    <property type="nucleotide sequence ID" value="NC_002758.2"/>
</dbReference>
<dbReference type="SMR" id="P0A059"/>
<dbReference type="KEGG" id="sav:SAV0074"/>
<dbReference type="HOGENOM" id="CLU_077094_2_0_9"/>
<dbReference type="Proteomes" id="UP000002481">
    <property type="component" value="Chromosome"/>
</dbReference>
<dbReference type="GO" id="GO:0045121">
    <property type="term" value="C:membrane raft"/>
    <property type="evidence" value="ECO:0007669"/>
    <property type="project" value="UniProtKB-SubCell"/>
</dbReference>
<dbReference type="GO" id="GO:0005886">
    <property type="term" value="C:plasma membrane"/>
    <property type="evidence" value="ECO:0007669"/>
    <property type="project" value="UniProtKB-SubCell"/>
</dbReference>
<dbReference type="GO" id="GO:0005524">
    <property type="term" value="F:ATP binding"/>
    <property type="evidence" value="ECO:0007669"/>
    <property type="project" value="UniProtKB-UniRule"/>
</dbReference>
<dbReference type="GO" id="GO:0008556">
    <property type="term" value="F:P-type potassium transmembrane transporter activity"/>
    <property type="evidence" value="ECO:0007669"/>
    <property type="project" value="InterPro"/>
</dbReference>
<dbReference type="HAMAP" id="MF_00276">
    <property type="entry name" value="KdpC"/>
    <property type="match status" value="1"/>
</dbReference>
<dbReference type="InterPro" id="IPR003820">
    <property type="entry name" value="KdpC"/>
</dbReference>
<dbReference type="NCBIfam" id="TIGR00681">
    <property type="entry name" value="kdpC"/>
    <property type="match status" value="1"/>
</dbReference>
<dbReference type="NCBIfam" id="NF001454">
    <property type="entry name" value="PRK00315.1"/>
    <property type="match status" value="1"/>
</dbReference>
<dbReference type="NCBIfam" id="NF010604">
    <property type="entry name" value="PRK14000.1"/>
    <property type="match status" value="1"/>
</dbReference>
<dbReference type="PANTHER" id="PTHR30042">
    <property type="entry name" value="POTASSIUM-TRANSPORTING ATPASE C CHAIN"/>
    <property type="match status" value="1"/>
</dbReference>
<dbReference type="PANTHER" id="PTHR30042:SF2">
    <property type="entry name" value="POTASSIUM-TRANSPORTING ATPASE KDPC SUBUNIT"/>
    <property type="match status" value="1"/>
</dbReference>
<dbReference type="Pfam" id="PF02669">
    <property type="entry name" value="KdpC"/>
    <property type="match status" value="1"/>
</dbReference>
<dbReference type="PIRSF" id="PIRSF001296">
    <property type="entry name" value="K_ATPase_KdpC"/>
    <property type="match status" value="1"/>
</dbReference>
<evidence type="ECO:0000255" key="1"/>
<evidence type="ECO:0000255" key="2">
    <source>
        <dbReference type="HAMAP-Rule" id="MF_00276"/>
    </source>
</evidence>
<evidence type="ECO:0000269" key="3">
    <source>
    </source>
</evidence>
<evidence type="ECO:0000305" key="4"/>
<sequence>MQTIRKSLGLVLIMFVLCGFIFPLTVTALGQVLFPEQANGSLVKQDGKVIGSKLIGQQWTEPKYFHGRISAVNYNMNANEVKESGGPASGGSNYGNSNPELKKRVQETIKQEGKKISSDAVTASGSGLDPDITVDNAKQQVKRIAKERNIDASKINHLIDENKQASPMADDYVNVLKLNITLDKL</sequence>
<proteinExistence type="evidence at protein level"/>
<name>KDPC2_STAAM</name>